<accession>Q3YW48</accession>
<keyword id="KW-0067">ATP-binding</keyword>
<keyword id="KW-0997">Cell inner membrane</keyword>
<keyword id="KW-1003">Cell membrane</keyword>
<keyword id="KW-0406">Ion transport</keyword>
<keyword id="KW-0472">Membrane</keyword>
<keyword id="KW-0533">Nickel</keyword>
<keyword id="KW-0921">Nickel transport</keyword>
<keyword id="KW-0547">Nucleotide-binding</keyword>
<keyword id="KW-1185">Reference proteome</keyword>
<keyword id="KW-1278">Translocase</keyword>
<keyword id="KW-0813">Transport</keyword>
<comment type="function">
    <text evidence="1">Part of the ABC transporter complex NikABCDE involved in nickel import. Responsible for energy coupling to the transport system.</text>
</comment>
<comment type="catalytic activity">
    <reaction evidence="1">
        <text>Ni(2+)(out) + ATP + H2O = Ni(2+)(in) + ADP + phosphate + H(+)</text>
        <dbReference type="Rhea" id="RHEA:15557"/>
        <dbReference type="ChEBI" id="CHEBI:15377"/>
        <dbReference type="ChEBI" id="CHEBI:15378"/>
        <dbReference type="ChEBI" id="CHEBI:30616"/>
        <dbReference type="ChEBI" id="CHEBI:43474"/>
        <dbReference type="ChEBI" id="CHEBI:49786"/>
        <dbReference type="ChEBI" id="CHEBI:456216"/>
        <dbReference type="EC" id="7.2.2.11"/>
    </reaction>
</comment>
<comment type="subunit">
    <text evidence="1">The complex is composed of two ATP-binding proteins (NikD and NikE), two transmembrane proteins (NikB and NikC) and a solute-binding protein (NikA).</text>
</comment>
<comment type="subcellular location">
    <subcellularLocation>
        <location evidence="1">Cell inner membrane</location>
        <topology evidence="1">Peripheral membrane protein</topology>
    </subcellularLocation>
</comment>
<comment type="similarity">
    <text evidence="1">Belongs to the ABC transporter superfamily. Nickel importer (TC 3.A.1.5.3) family.</text>
</comment>
<organism>
    <name type="scientific">Shigella sonnei (strain Ss046)</name>
    <dbReference type="NCBI Taxonomy" id="300269"/>
    <lineage>
        <taxon>Bacteria</taxon>
        <taxon>Pseudomonadati</taxon>
        <taxon>Pseudomonadota</taxon>
        <taxon>Gammaproteobacteria</taxon>
        <taxon>Enterobacterales</taxon>
        <taxon>Enterobacteriaceae</taxon>
        <taxon>Shigella</taxon>
    </lineage>
</organism>
<gene>
    <name evidence="1" type="primary">nikE</name>
    <name type="ordered locus">SSON_3718</name>
</gene>
<reference key="1">
    <citation type="journal article" date="2005" name="Nucleic Acids Res.">
        <title>Genome dynamics and diversity of Shigella species, the etiologic agents of bacillary dysentery.</title>
        <authorList>
            <person name="Yang F."/>
            <person name="Yang J."/>
            <person name="Zhang X."/>
            <person name="Chen L."/>
            <person name="Jiang Y."/>
            <person name="Yan Y."/>
            <person name="Tang X."/>
            <person name="Wang J."/>
            <person name="Xiong Z."/>
            <person name="Dong J."/>
            <person name="Xue Y."/>
            <person name="Zhu Y."/>
            <person name="Xu X."/>
            <person name="Sun L."/>
            <person name="Chen S."/>
            <person name="Nie H."/>
            <person name="Peng J."/>
            <person name="Xu J."/>
            <person name="Wang Y."/>
            <person name="Yuan Z."/>
            <person name="Wen Y."/>
            <person name="Yao Z."/>
            <person name="Shen Y."/>
            <person name="Qiang B."/>
            <person name="Hou Y."/>
            <person name="Yu J."/>
            <person name="Jin Q."/>
        </authorList>
    </citation>
    <scope>NUCLEOTIDE SEQUENCE [LARGE SCALE GENOMIC DNA]</scope>
    <source>
        <strain>Ss046</strain>
    </source>
</reference>
<proteinExistence type="inferred from homology"/>
<sequence>MTLLNVSGLSHHYAHGGFNGKHQHQAVLNNVSLTLKSGETVALLGRSGCGKSTLARLLVGLESPAQGNISWRGEPLAKLNRAQRKAFRRDIQMVFQDSISAVNPRKTVREILREPMRHLLSLKKSEQLARASEMLKAVDLDDSVLDKRPPQLSGGQLQRVCLARALAVEPKLLILDEAVSNLDLVLQAGVIRLLKKLQQQFGTACLFITHDLRLVERFCQRVMVMDNGQIVETQVVGDKLTFSSDAGRVLQNAVLPAFPVRRRTTEKV</sequence>
<protein>
    <recommendedName>
        <fullName evidence="1">Nickel import ATP-binding protein NikE</fullName>
        <ecNumber evidence="1">7.2.2.11</ecNumber>
    </recommendedName>
</protein>
<name>NIKE_SHISS</name>
<dbReference type="EC" id="7.2.2.11" evidence="1"/>
<dbReference type="EMBL" id="CP000038">
    <property type="protein sequence ID" value="AAZ90264.1"/>
    <property type="molecule type" value="Genomic_DNA"/>
</dbReference>
<dbReference type="RefSeq" id="WP_000173703.1">
    <property type="nucleotide sequence ID" value="NC_007384.1"/>
</dbReference>
<dbReference type="SMR" id="Q3YW48"/>
<dbReference type="GeneID" id="93778511"/>
<dbReference type="KEGG" id="ssn:SSON_3718"/>
<dbReference type="HOGENOM" id="CLU_000604_1_23_6"/>
<dbReference type="Proteomes" id="UP000002529">
    <property type="component" value="Chromosome"/>
</dbReference>
<dbReference type="GO" id="GO:0005886">
    <property type="term" value="C:plasma membrane"/>
    <property type="evidence" value="ECO:0007669"/>
    <property type="project" value="UniProtKB-SubCell"/>
</dbReference>
<dbReference type="GO" id="GO:0015413">
    <property type="term" value="F:ABC-type nickel transporter activity"/>
    <property type="evidence" value="ECO:0007669"/>
    <property type="project" value="UniProtKB-EC"/>
</dbReference>
<dbReference type="GO" id="GO:0005524">
    <property type="term" value="F:ATP binding"/>
    <property type="evidence" value="ECO:0007669"/>
    <property type="project" value="UniProtKB-KW"/>
</dbReference>
<dbReference type="GO" id="GO:0016887">
    <property type="term" value="F:ATP hydrolysis activity"/>
    <property type="evidence" value="ECO:0007669"/>
    <property type="project" value="InterPro"/>
</dbReference>
<dbReference type="GO" id="GO:0016151">
    <property type="term" value="F:nickel cation binding"/>
    <property type="evidence" value="ECO:0007669"/>
    <property type="project" value="InterPro"/>
</dbReference>
<dbReference type="CDD" id="cd03257">
    <property type="entry name" value="ABC_NikE_OppD_transporters"/>
    <property type="match status" value="1"/>
</dbReference>
<dbReference type="FunFam" id="3.40.50.300:FF:001020">
    <property type="entry name" value="Nickel import ATP-binding protein NikE"/>
    <property type="match status" value="1"/>
</dbReference>
<dbReference type="Gene3D" id="3.40.50.300">
    <property type="entry name" value="P-loop containing nucleotide triphosphate hydrolases"/>
    <property type="match status" value="1"/>
</dbReference>
<dbReference type="InterPro" id="IPR003593">
    <property type="entry name" value="AAA+_ATPase"/>
</dbReference>
<dbReference type="InterPro" id="IPR050319">
    <property type="entry name" value="ABC_transp_ATP-bind"/>
</dbReference>
<dbReference type="InterPro" id="IPR003439">
    <property type="entry name" value="ABC_transporter-like_ATP-bd"/>
</dbReference>
<dbReference type="InterPro" id="IPR017871">
    <property type="entry name" value="ABC_transporter-like_CS"/>
</dbReference>
<dbReference type="InterPro" id="IPR014137">
    <property type="entry name" value="Nickel_NikE"/>
</dbReference>
<dbReference type="InterPro" id="IPR027417">
    <property type="entry name" value="P-loop_NTPase"/>
</dbReference>
<dbReference type="NCBIfam" id="TIGR02769">
    <property type="entry name" value="nickel_nikE"/>
    <property type="match status" value="1"/>
</dbReference>
<dbReference type="NCBIfam" id="NF007739">
    <property type="entry name" value="PRK10419.1"/>
    <property type="match status" value="1"/>
</dbReference>
<dbReference type="PANTHER" id="PTHR43776:SF7">
    <property type="entry name" value="D,D-DIPEPTIDE TRANSPORT ATP-BINDING PROTEIN DDPF-RELATED"/>
    <property type="match status" value="1"/>
</dbReference>
<dbReference type="PANTHER" id="PTHR43776">
    <property type="entry name" value="TRANSPORT ATP-BINDING PROTEIN"/>
    <property type="match status" value="1"/>
</dbReference>
<dbReference type="Pfam" id="PF00005">
    <property type="entry name" value="ABC_tran"/>
    <property type="match status" value="1"/>
</dbReference>
<dbReference type="SMART" id="SM00382">
    <property type="entry name" value="AAA"/>
    <property type="match status" value="1"/>
</dbReference>
<dbReference type="SUPFAM" id="SSF52540">
    <property type="entry name" value="P-loop containing nucleoside triphosphate hydrolases"/>
    <property type="match status" value="1"/>
</dbReference>
<dbReference type="PROSITE" id="PS00211">
    <property type="entry name" value="ABC_TRANSPORTER_1"/>
    <property type="match status" value="1"/>
</dbReference>
<dbReference type="PROSITE" id="PS50893">
    <property type="entry name" value="ABC_TRANSPORTER_2"/>
    <property type="match status" value="1"/>
</dbReference>
<dbReference type="PROSITE" id="PS51248">
    <property type="entry name" value="NIKE"/>
    <property type="match status" value="1"/>
</dbReference>
<evidence type="ECO:0000255" key="1">
    <source>
        <dbReference type="HAMAP-Rule" id="MF_01712"/>
    </source>
</evidence>
<feature type="chain" id="PRO_0000274126" description="Nickel import ATP-binding protein NikE">
    <location>
        <begin position="1"/>
        <end position="268"/>
    </location>
</feature>
<feature type="domain" description="ABC transporter" evidence="1">
    <location>
        <begin position="4"/>
        <end position="252"/>
    </location>
</feature>
<feature type="binding site" evidence="1">
    <location>
        <begin position="45"/>
        <end position="52"/>
    </location>
    <ligand>
        <name>ATP</name>
        <dbReference type="ChEBI" id="CHEBI:30616"/>
    </ligand>
</feature>